<organism>
    <name type="scientific">Mycobacterium bovis (strain ATCC BAA-935 / AF2122/97)</name>
    <dbReference type="NCBI Taxonomy" id="233413"/>
    <lineage>
        <taxon>Bacteria</taxon>
        <taxon>Bacillati</taxon>
        <taxon>Actinomycetota</taxon>
        <taxon>Actinomycetes</taxon>
        <taxon>Mycobacteriales</taxon>
        <taxon>Mycobacteriaceae</taxon>
        <taxon>Mycobacterium</taxon>
        <taxon>Mycobacterium tuberculosis complex</taxon>
    </lineage>
</organism>
<reference key="1">
    <citation type="journal article" date="2003" name="Proc. Natl. Acad. Sci. U.S.A.">
        <title>The complete genome sequence of Mycobacterium bovis.</title>
        <authorList>
            <person name="Garnier T."/>
            <person name="Eiglmeier K."/>
            <person name="Camus J.-C."/>
            <person name="Medina N."/>
            <person name="Mansoor H."/>
            <person name="Pryor M."/>
            <person name="Duthoy S."/>
            <person name="Grondin S."/>
            <person name="Lacroix C."/>
            <person name="Monsempe C."/>
            <person name="Simon S."/>
            <person name="Harris B."/>
            <person name="Atkin R."/>
            <person name="Doggett J."/>
            <person name="Mayes R."/>
            <person name="Keating L."/>
            <person name="Wheeler P.R."/>
            <person name="Parkhill J."/>
            <person name="Barrell B.G."/>
            <person name="Cole S.T."/>
            <person name="Gordon S.V."/>
            <person name="Hewinson R.G."/>
        </authorList>
    </citation>
    <scope>NUCLEOTIDE SEQUENCE [LARGE SCALE GENOMIC DNA]</scope>
    <source>
        <strain>ATCC BAA-935 / AF2122/97</strain>
    </source>
</reference>
<reference key="2">
    <citation type="journal article" date="2017" name="Genome Announc.">
        <title>Updated reference genome sequence and annotation of Mycobacterium bovis AF2122/97.</title>
        <authorList>
            <person name="Malone K.M."/>
            <person name="Farrell D."/>
            <person name="Stuber T.P."/>
            <person name="Schubert O.T."/>
            <person name="Aebersold R."/>
            <person name="Robbe-Austerman S."/>
            <person name="Gordon S.V."/>
        </authorList>
    </citation>
    <scope>NUCLEOTIDE SEQUENCE [LARGE SCALE GENOMIC DNA]</scope>
    <scope>GENOME REANNOTATION</scope>
    <source>
        <strain>ATCC BAA-935 / AF2122/97</strain>
    </source>
</reference>
<accession>P0A505</accession>
<accession>A0A1R3XWT6</accession>
<accession>O08365</accession>
<accession>X2BGH4</accession>
<feature type="chain" id="PRO_0000046340" description="Calcium-transporting ATPase CtpE">
    <location>
        <begin position="1"/>
        <end position="797"/>
    </location>
</feature>
<feature type="transmembrane region" description="Helical" evidence="3">
    <location>
        <begin position="55"/>
        <end position="75"/>
    </location>
</feature>
<feature type="transmembrane region" description="Helical" evidence="3">
    <location>
        <begin position="215"/>
        <end position="235"/>
    </location>
</feature>
<feature type="transmembrane region" description="Helical" evidence="3">
    <location>
        <begin position="254"/>
        <end position="274"/>
    </location>
</feature>
<feature type="transmembrane region" description="Helical" evidence="3">
    <location>
        <begin position="601"/>
        <end position="621"/>
    </location>
</feature>
<feature type="transmembrane region" description="Helical" evidence="3">
    <location>
        <begin position="633"/>
        <end position="653"/>
    </location>
</feature>
<feature type="transmembrane region" description="Helical" evidence="3">
    <location>
        <begin position="667"/>
        <end position="687"/>
    </location>
</feature>
<feature type="transmembrane region" description="Helical" evidence="3">
    <location>
        <begin position="703"/>
        <end position="723"/>
    </location>
</feature>
<feature type="transmembrane region" description="Helical" evidence="3">
    <location>
        <begin position="729"/>
        <end position="749"/>
    </location>
</feature>
<feature type="transmembrane region" description="Helical" evidence="3">
    <location>
        <begin position="764"/>
        <end position="784"/>
    </location>
</feature>
<feature type="active site" description="4-aspartylphosphate intermediate" evidence="2">
    <location>
        <position position="301"/>
    </location>
</feature>
<feature type="binding site" evidence="2">
    <location>
        <position position="301"/>
    </location>
    <ligand>
        <name>Mg(2+)</name>
        <dbReference type="ChEBI" id="CHEBI:18420"/>
    </ligand>
</feature>
<feature type="binding site" evidence="2">
    <location>
        <position position="303"/>
    </location>
    <ligand>
        <name>Mg(2+)</name>
        <dbReference type="ChEBI" id="CHEBI:18420"/>
    </ligand>
</feature>
<feature type="binding site" evidence="2">
    <location>
        <position position="536"/>
    </location>
    <ligand>
        <name>Mg(2+)</name>
        <dbReference type="ChEBI" id="CHEBI:18420"/>
    </ligand>
</feature>
<sequence length="797" mass="84973">MTRSASATAGLTDAEVAQRVAEGKSNDIPERVTRTVGQIVRANVFTRINAILGVLLLIVLATGSLINGMFGLLIIANSVIGMVQEIRAKQTLDKLAIIGQAKPLVRRQSGTRTRSTNEVVLDDIIELGPGDQVVVDGEVVEEENLEIDESLLTGEADPIAKDAGDTVMSGSFVVSGAGAYRATKVGSEAYAAKLAAEASKFTLVKSELRNGINRILQFITYLLVPAGLLTIYTQLFTTHVGWRESVLRMVGALVPMVPEGLVLMTSIAFAVGVVRLGQRQCLVQELPAIEGLARVDVVCADKTGTLTESGMRVCEVEELDGAGRQESVADVLAALAAADARPNASMQAIAEAFHSPPGWVVAANAPFKSATKWSGVSFRDHGNWVIGAPDVLLDPASVAARQAERIGAQGLRVLLLAAGSVAVDHAQAPGQVTPVALVVLEQKVRPDARETLDYFAVQNVSVKVISGDNAVSVGAVADRLGLHGEAMDARALPTGREELADTLDSYTSFGRVRPDQKRAIVHALQSHGHTVAMTGDGVNDVLALKDADIGVAMGSGSPASRAVAQIVLLNNRFATLPHVVGEGRRVIGNIERVANLFLTKTVYSVLLALLVGIECLIAIPLRRDPLLFPFQPIHVTIAAWFTIGIPAFILSLAPNNERAYPGFVRRVMTSAVPFGLVIGVATFVTYLAAYQGRYASWQEQEQASTAALITLLMTALWVLAVIARPYQWWRLALVLASGLAYVVIFSLPLAREKFLLDASNLATTSIALAVGVVGAATIEAMWWIRSRMLGVKPRVWR</sequence>
<evidence type="ECO:0000250" key="1">
    <source>
        <dbReference type="UniProtKB" id="A0R3Y2"/>
    </source>
</evidence>
<evidence type="ECO:0000250" key="2">
    <source>
        <dbReference type="UniProtKB" id="Q5ZWR1"/>
    </source>
</evidence>
<evidence type="ECO:0000255" key="3"/>
<evidence type="ECO:0000305" key="4"/>
<protein>
    <recommendedName>
        <fullName evidence="1">Calcium-transporting ATPase CtpE</fullName>
        <ecNumber evidence="1">7.2.2.10</ecNumber>
    </recommendedName>
</protein>
<dbReference type="EC" id="7.2.2.10" evidence="1"/>
<dbReference type="EMBL" id="LT708304">
    <property type="protein sequence ID" value="SIT99530.1"/>
    <property type="molecule type" value="Genomic_DNA"/>
</dbReference>
<dbReference type="RefSeq" id="NP_854589.1">
    <property type="nucleotide sequence ID" value="NC_002945.3"/>
</dbReference>
<dbReference type="RefSeq" id="WP_003898639.1">
    <property type="nucleotide sequence ID" value="NC_002945.4"/>
</dbReference>
<dbReference type="SMR" id="P0A505"/>
<dbReference type="KEGG" id="mbo:BQ2027_MB0932"/>
<dbReference type="PATRIC" id="fig|233413.5.peg.1013"/>
<dbReference type="Proteomes" id="UP000001419">
    <property type="component" value="Chromosome"/>
</dbReference>
<dbReference type="GO" id="GO:0005886">
    <property type="term" value="C:plasma membrane"/>
    <property type="evidence" value="ECO:0007669"/>
    <property type="project" value="UniProtKB-SubCell"/>
</dbReference>
<dbReference type="GO" id="GO:0005524">
    <property type="term" value="F:ATP binding"/>
    <property type="evidence" value="ECO:0007669"/>
    <property type="project" value="UniProtKB-KW"/>
</dbReference>
<dbReference type="GO" id="GO:0016887">
    <property type="term" value="F:ATP hydrolysis activity"/>
    <property type="evidence" value="ECO:0007669"/>
    <property type="project" value="InterPro"/>
</dbReference>
<dbReference type="GO" id="GO:0046872">
    <property type="term" value="F:metal ion binding"/>
    <property type="evidence" value="ECO:0007669"/>
    <property type="project" value="UniProtKB-KW"/>
</dbReference>
<dbReference type="GO" id="GO:0005388">
    <property type="term" value="F:P-type calcium transporter activity"/>
    <property type="evidence" value="ECO:0007669"/>
    <property type="project" value="UniProtKB-EC"/>
</dbReference>
<dbReference type="CDD" id="cd02609">
    <property type="entry name" value="P-type_ATPase"/>
    <property type="match status" value="1"/>
</dbReference>
<dbReference type="FunFam" id="2.70.150.10:FF:000075">
    <property type="entry name" value="Metal cation transporter P-type ATPase"/>
    <property type="match status" value="1"/>
</dbReference>
<dbReference type="FunFam" id="3.40.1110.10:FF:000112">
    <property type="entry name" value="Metal cation transporter P-type ATPase"/>
    <property type="match status" value="1"/>
</dbReference>
<dbReference type="Gene3D" id="3.40.1110.10">
    <property type="entry name" value="Calcium-transporting ATPase, cytoplasmic domain N"/>
    <property type="match status" value="1"/>
</dbReference>
<dbReference type="Gene3D" id="2.70.150.10">
    <property type="entry name" value="Calcium-transporting ATPase, cytoplasmic transduction domain A"/>
    <property type="match status" value="1"/>
</dbReference>
<dbReference type="Gene3D" id="1.20.1110.10">
    <property type="entry name" value="Calcium-transporting ATPase, transmembrane domain"/>
    <property type="match status" value="1"/>
</dbReference>
<dbReference type="Gene3D" id="3.40.50.1000">
    <property type="entry name" value="HAD superfamily/HAD-like"/>
    <property type="match status" value="1"/>
</dbReference>
<dbReference type="InterPro" id="IPR023299">
    <property type="entry name" value="ATPase_P-typ_cyto_dom_N"/>
</dbReference>
<dbReference type="InterPro" id="IPR018303">
    <property type="entry name" value="ATPase_P-typ_P_site"/>
</dbReference>
<dbReference type="InterPro" id="IPR023298">
    <property type="entry name" value="ATPase_P-typ_TM_dom_sf"/>
</dbReference>
<dbReference type="InterPro" id="IPR008250">
    <property type="entry name" value="ATPase_P-typ_transduc_dom_A_sf"/>
</dbReference>
<dbReference type="InterPro" id="IPR036412">
    <property type="entry name" value="HAD-like_sf"/>
</dbReference>
<dbReference type="InterPro" id="IPR023214">
    <property type="entry name" value="HAD_sf"/>
</dbReference>
<dbReference type="InterPro" id="IPR001757">
    <property type="entry name" value="P_typ_ATPase"/>
</dbReference>
<dbReference type="InterPro" id="IPR044492">
    <property type="entry name" value="P_typ_ATPase_HD_dom"/>
</dbReference>
<dbReference type="NCBIfam" id="TIGR01494">
    <property type="entry name" value="ATPase_P-type"/>
    <property type="match status" value="2"/>
</dbReference>
<dbReference type="PANTHER" id="PTHR42861">
    <property type="entry name" value="CALCIUM-TRANSPORTING ATPASE"/>
    <property type="match status" value="1"/>
</dbReference>
<dbReference type="Pfam" id="PF00122">
    <property type="entry name" value="E1-E2_ATPase"/>
    <property type="match status" value="1"/>
</dbReference>
<dbReference type="Pfam" id="PF00702">
    <property type="entry name" value="Hydrolase"/>
    <property type="match status" value="1"/>
</dbReference>
<dbReference type="PRINTS" id="PR00119">
    <property type="entry name" value="CATATPASE"/>
</dbReference>
<dbReference type="PRINTS" id="PR00120">
    <property type="entry name" value="HATPASE"/>
</dbReference>
<dbReference type="SFLD" id="SFLDG00002">
    <property type="entry name" value="C1.7:_P-type_atpase_like"/>
    <property type="match status" value="1"/>
</dbReference>
<dbReference type="SFLD" id="SFLDF00027">
    <property type="entry name" value="p-type_atpase"/>
    <property type="match status" value="1"/>
</dbReference>
<dbReference type="SUPFAM" id="SSF81653">
    <property type="entry name" value="Calcium ATPase, transduction domain A"/>
    <property type="match status" value="1"/>
</dbReference>
<dbReference type="SUPFAM" id="SSF81665">
    <property type="entry name" value="Calcium ATPase, transmembrane domain M"/>
    <property type="match status" value="1"/>
</dbReference>
<dbReference type="SUPFAM" id="SSF56784">
    <property type="entry name" value="HAD-like"/>
    <property type="match status" value="1"/>
</dbReference>
<dbReference type="PROSITE" id="PS00154">
    <property type="entry name" value="ATPASE_E1_E2"/>
    <property type="match status" value="1"/>
</dbReference>
<keyword id="KW-0067">ATP-binding</keyword>
<keyword id="KW-0106">Calcium</keyword>
<keyword id="KW-0109">Calcium transport</keyword>
<keyword id="KW-1003">Cell membrane</keyword>
<keyword id="KW-0406">Ion transport</keyword>
<keyword id="KW-0460">Magnesium</keyword>
<keyword id="KW-0472">Membrane</keyword>
<keyword id="KW-0479">Metal-binding</keyword>
<keyword id="KW-0547">Nucleotide-binding</keyword>
<keyword id="KW-0597">Phosphoprotein</keyword>
<keyword id="KW-1185">Reference proteome</keyword>
<keyword id="KW-1278">Translocase</keyword>
<keyword id="KW-0812">Transmembrane</keyword>
<keyword id="KW-1133">Transmembrane helix</keyword>
<keyword id="KW-0813">Transport</keyword>
<proteinExistence type="inferred from homology"/>
<gene>
    <name type="primary">ctpE</name>
    <name type="ordered locus">BQ2027_MB0932</name>
</gene>
<name>CTPE_MYCBO</name>
<comment type="function">
    <text evidence="1">P-type ATPase involved in specific uptake of calcium.</text>
</comment>
<comment type="catalytic activity">
    <reaction evidence="1">
        <text>Ca(2+)(in) + ATP + H2O = Ca(2+)(out) + ADP + phosphate + H(+)</text>
        <dbReference type="Rhea" id="RHEA:18105"/>
        <dbReference type="ChEBI" id="CHEBI:15377"/>
        <dbReference type="ChEBI" id="CHEBI:15378"/>
        <dbReference type="ChEBI" id="CHEBI:29108"/>
        <dbReference type="ChEBI" id="CHEBI:30616"/>
        <dbReference type="ChEBI" id="CHEBI:43474"/>
        <dbReference type="ChEBI" id="CHEBI:456216"/>
        <dbReference type="EC" id="7.2.2.10"/>
    </reaction>
</comment>
<comment type="subcellular location">
    <subcellularLocation>
        <location evidence="4">Cell membrane</location>
        <topology evidence="3">Multi-pass membrane protein</topology>
    </subcellularLocation>
</comment>
<comment type="similarity">
    <text evidence="4">Belongs to the cation transport ATPase (P-type) (TC 3.A.3) family.</text>
</comment>